<accession>Q8CDI2</accession>
<accession>Q4G0C8</accession>
<accession>Q8R0R1</accession>
<evidence type="ECO:0000250" key="1"/>
<evidence type="ECO:0000250" key="2">
    <source>
        <dbReference type="UniProtKB" id="Q4G163"/>
    </source>
</evidence>
<evidence type="ECO:0000255" key="3">
    <source>
        <dbReference type="PROSITE-ProRule" id="PRU01220"/>
    </source>
</evidence>
<evidence type="ECO:0000256" key="4">
    <source>
        <dbReference type="SAM" id="MobiDB-lite"/>
    </source>
</evidence>
<evidence type="ECO:0000269" key="5">
    <source>
    </source>
</evidence>
<evidence type="ECO:0000269" key="6">
    <source>
    </source>
</evidence>
<evidence type="ECO:0000305" key="7"/>
<evidence type="ECO:0007829" key="8">
    <source>
        <dbReference type="PDB" id="2RT9"/>
    </source>
</evidence>
<dbReference type="EMBL" id="AK030012">
    <property type="protein sequence ID" value="BAC26733.1"/>
    <property type="molecule type" value="mRNA"/>
</dbReference>
<dbReference type="EMBL" id="BC026503">
    <property type="protein sequence ID" value="AAH26503.1"/>
    <property type="molecule type" value="mRNA"/>
</dbReference>
<dbReference type="EMBL" id="BC098484">
    <property type="protein sequence ID" value="AAH98484.1"/>
    <property type="molecule type" value="mRNA"/>
</dbReference>
<dbReference type="PDB" id="2RT9">
    <property type="method" value="NMR"/>
    <property type="chains" value="A=565-616"/>
</dbReference>
<dbReference type="PDB" id="5DMS">
    <property type="method" value="X-ray"/>
    <property type="resolution" value="1.90 A"/>
    <property type="chains" value="B/D=169-177"/>
</dbReference>
<dbReference type="PDB" id="5DMV">
    <property type="method" value="X-ray"/>
    <property type="resolution" value="2.50 A"/>
    <property type="chains" value="D=146-177"/>
</dbReference>
<dbReference type="PDBsum" id="2RT9"/>
<dbReference type="PDBsum" id="5DMS"/>
<dbReference type="PDBsum" id="5DMV"/>
<dbReference type="BMRB" id="Q8CDI2"/>
<dbReference type="SMR" id="Q8CDI2"/>
<dbReference type="FunCoup" id="Q8CDI2">
    <property type="interactions" value="1398"/>
</dbReference>
<dbReference type="IntAct" id="Q8CDI2">
    <property type="interactions" value="1"/>
</dbReference>
<dbReference type="MINT" id="Q8CDI2"/>
<dbReference type="STRING" id="10090.ENSMUSP00000054125"/>
<dbReference type="iPTMnet" id="Q8CDI2"/>
<dbReference type="PhosphoSitePlus" id="Q8CDI2"/>
<dbReference type="PaxDb" id="10090-ENSMUSP00000054125"/>
<dbReference type="ProteomicsDB" id="272968"/>
<dbReference type="AGR" id="MGI:1926053"/>
<dbReference type="MGI" id="MGI:1926053">
    <property type="gene designation" value="Fbxo43"/>
</dbReference>
<dbReference type="eggNOG" id="ENOG502QRSQ">
    <property type="taxonomic scope" value="Eukaryota"/>
</dbReference>
<dbReference type="InParanoid" id="Q8CDI2"/>
<dbReference type="PhylomeDB" id="Q8CDI2"/>
<dbReference type="UniPathway" id="UPA00143"/>
<dbReference type="ChiTaRS" id="Fbxo43">
    <property type="organism name" value="mouse"/>
</dbReference>
<dbReference type="EvolutionaryTrace" id="Q8CDI2"/>
<dbReference type="PRO" id="PR:Q8CDI2"/>
<dbReference type="Proteomes" id="UP000000589">
    <property type="component" value="Unplaced"/>
</dbReference>
<dbReference type="RNAct" id="Q8CDI2">
    <property type="molecule type" value="protein"/>
</dbReference>
<dbReference type="GO" id="GO:0001674">
    <property type="term" value="C:female germ cell nucleus"/>
    <property type="evidence" value="ECO:0000314"/>
    <property type="project" value="MGI"/>
</dbReference>
<dbReference type="GO" id="GO:0008270">
    <property type="term" value="F:zinc ion binding"/>
    <property type="evidence" value="ECO:0007669"/>
    <property type="project" value="UniProtKB-KW"/>
</dbReference>
<dbReference type="GO" id="GO:0140013">
    <property type="term" value="P:meiotic nuclear division"/>
    <property type="evidence" value="ECO:0000315"/>
    <property type="project" value="MGI"/>
</dbReference>
<dbReference type="GO" id="GO:0010948">
    <property type="term" value="P:negative regulation of cell cycle process"/>
    <property type="evidence" value="ECO:0000250"/>
    <property type="project" value="UniProtKB"/>
</dbReference>
<dbReference type="GO" id="GO:0045835">
    <property type="term" value="P:negative regulation of meiotic nuclear division"/>
    <property type="evidence" value="ECO:0000315"/>
    <property type="project" value="MGI"/>
</dbReference>
<dbReference type="GO" id="GO:0042177">
    <property type="term" value="P:negative regulation of protein catabolic process"/>
    <property type="evidence" value="ECO:0000315"/>
    <property type="project" value="MGI"/>
</dbReference>
<dbReference type="GO" id="GO:0030163">
    <property type="term" value="P:protein catabolic process"/>
    <property type="evidence" value="ECO:0000315"/>
    <property type="project" value="MGI"/>
</dbReference>
<dbReference type="GO" id="GO:0016567">
    <property type="term" value="P:protein ubiquitination"/>
    <property type="evidence" value="ECO:0007669"/>
    <property type="project" value="UniProtKB-UniPathway"/>
</dbReference>
<dbReference type="GO" id="GO:0040020">
    <property type="term" value="P:regulation of meiotic nuclear division"/>
    <property type="evidence" value="ECO:0000316"/>
    <property type="project" value="MGI"/>
</dbReference>
<dbReference type="GO" id="GO:0007088">
    <property type="term" value="P:regulation of mitotic nuclear division"/>
    <property type="evidence" value="ECO:0007669"/>
    <property type="project" value="InterPro"/>
</dbReference>
<dbReference type="CDD" id="cd20365">
    <property type="entry name" value="BRcat_RBR_FBXO43"/>
    <property type="match status" value="1"/>
</dbReference>
<dbReference type="FunFam" id="2.20.25.20:FF:000006">
    <property type="entry name" value="F-box only protein 5"/>
    <property type="match status" value="1"/>
</dbReference>
<dbReference type="FunFam" id="1.20.1280.50:FF:000046">
    <property type="entry name" value="F-box protein 43"/>
    <property type="match status" value="1"/>
</dbReference>
<dbReference type="Gene3D" id="1.20.1280.50">
    <property type="match status" value="1"/>
</dbReference>
<dbReference type="Gene3D" id="2.20.25.20">
    <property type="match status" value="1"/>
</dbReference>
<dbReference type="InterPro" id="IPR047147">
    <property type="entry name" value="FBX5_43"/>
</dbReference>
<dbReference type="InterPro" id="IPR002867">
    <property type="entry name" value="IBR_dom"/>
</dbReference>
<dbReference type="InterPro" id="IPR044064">
    <property type="entry name" value="ZF_ZBR"/>
</dbReference>
<dbReference type="PANTHER" id="PTHR15493:SF1">
    <property type="entry name" value="F-BOX ONLY PROTEIN 43"/>
    <property type="match status" value="1"/>
</dbReference>
<dbReference type="PANTHER" id="PTHR15493">
    <property type="entry name" value="F-BOX ONLY PROTEIN 5 AND 43"/>
    <property type="match status" value="1"/>
</dbReference>
<dbReference type="SMART" id="SM00647">
    <property type="entry name" value="IBR"/>
    <property type="match status" value="1"/>
</dbReference>
<dbReference type="SUPFAM" id="SSF57850">
    <property type="entry name" value="RING/U-box"/>
    <property type="match status" value="1"/>
</dbReference>
<dbReference type="PROSITE" id="PS51872">
    <property type="entry name" value="ZF_ZBR"/>
    <property type="match status" value="1"/>
</dbReference>
<protein>
    <recommendedName>
        <fullName>F-box only protein 43</fullName>
    </recommendedName>
    <alternativeName>
        <fullName>Endogenous meiotic inhibitor 2</fullName>
    </alternativeName>
</protein>
<name>FBX43_MOUSE</name>
<feature type="chain" id="PRO_0000247234" description="F-box only protein 43">
    <location>
        <begin position="1"/>
        <end position="640"/>
    </location>
</feature>
<feature type="domain" description="F-box">
    <location>
        <begin position="423"/>
        <end position="480"/>
    </location>
</feature>
<feature type="zinc finger region" description="ZBR-type" evidence="3">
    <location>
        <begin position="568"/>
        <end position="616"/>
    </location>
</feature>
<feature type="region of interest" description="Disordered" evidence="4">
    <location>
        <begin position="328"/>
        <end position="354"/>
    </location>
</feature>
<feature type="region of interest" description="Disordered" evidence="4">
    <location>
        <begin position="615"/>
        <end position="640"/>
    </location>
</feature>
<feature type="binding site" evidence="3">
    <location>
        <position position="572"/>
    </location>
    <ligand>
        <name>Zn(2+)</name>
        <dbReference type="ChEBI" id="CHEBI:29105"/>
        <label>1</label>
    </ligand>
</feature>
<feature type="binding site" evidence="3">
    <location>
        <position position="575"/>
    </location>
    <ligand>
        <name>Zn(2+)</name>
        <dbReference type="ChEBI" id="CHEBI:29105"/>
        <label>1</label>
    </ligand>
</feature>
<feature type="binding site" evidence="3">
    <location>
        <position position="590"/>
    </location>
    <ligand>
        <name>Zn(2+)</name>
        <dbReference type="ChEBI" id="CHEBI:29105"/>
        <label>1</label>
    </ligand>
</feature>
<feature type="binding site" evidence="3">
    <location>
        <position position="595"/>
    </location>
    <ligand>
        <name>Zn(2+)</name>
        <dbReference type="ChEBI" id="CHEBI:29105"/>
        <label>1</label>
    </ligand>
</feature>
<feature type="binding site" evidence="3">
    <location>
        <position position="600"/>
    </location>
    <ligand>
        <name>Zn(2+)</name>
        <dbReference type="ChEBI" id="CHEBI:29105"/>
        <label>2</label>
    </ligand>
</feature>
<feature type="binding site" evidence="3">
    <location>
        <position position="603"/>
    </location>
    <ligand>
        <name>Zn(2+)</name>
        <dbReference type="ChEBI" id="CHEBI:29105"/>
        <label>2</label>
    </ligand>
</feature>
<feature type="binding site" evidence="3">
    <location>
        <position position="608"/>
    </location>
    <ligand>
        <name>Zn(2+)</name>
        <dbReference type="ChEBI" id="CHEBI:29105"/>
        <label>2</label>
    </ligand>
</feature>
<feature type="binding site" evidence="3">
    <location>
        <position position="613"/>
    </location>
    <ligand>
        <name>Zn(2+)</name>
        <dbReference type="ChEBI" id="CHEBI:29105"/>
        <label>2</label>
    </ligand>
</feature>
<feature type="modified residue" description="Phosphothreonine" evidence="2">
    <location>
        <position position="176"/>
    </location>
</feature>
<feature type="modified residue" description="Phosphoserine" evidence="2">
    <location>
        <position position="275"/>
    </location>
</feature>
<feature type="sequence conflict" description="In Ref. 2; AAH98484." evidence="7" ref="2">
    <original>G</original>
    <variation>GS</variation>
    <location>
        <position position="332"/>
    </location>
</feature>
<feature type="sequence conflict" description="In Ref. 2; AAH98484." evidence="7" ref="2">
    <original>Q</original>
    <variation>R</variation>
    <location>
        <position position="392"/>
    </location>
</feature>
<feature type="sequence conflict" description="In Ref. 1; BAC26733." evidence="7" ref="1">
    <original>R</original>
    <variation>P</variation>
    <location>
        <position position="497"/>
    </location>
</feature>
<feature type="turn" evidence="8">
    <location>
        <begin position="573"/>
        <end position="575"/>
    </location>
</feature>
<feature type="strand" evidence="8">
    <location>
        <begin position="580"/>
        <end position="582"/>
    </location>
</feature>
<feature type="turn" evidence="8">
    <location>
        <begin position="583"/>
        <end position="586"/>
    </location>
</feature>
<feature type="strand" evidence="8">
    <location>
        <begin position="587"/>
        <end position="589"/>
    </location>
</feature>
<feature type="turn" evidence="8">
    <location>
        <begin position="593"/>
        <end position="595"/>
    </location>
</feature>
<feature type="strand" evidence="8">
    <location>
        <begin position="598"/>
        <end position="600"/>
    </location>
</feature>
<feature type="turn" evidence="8">
    <location>
        <begin position="601"/>
        <end position="603"/>
    </location>
</feature>
<keyword id="KW-0002">3D-structure</keyword>
<keyword id="KW-0469">Meiosis</keyword>
<keyword id="KW-0479">Metal-binding</keyword>
<keyword id="KW-0597">Phosphoprotein</keyword>
<keyword id="KW-1185">Reference proteome</keyword>
<keyword id="KW-0832">Ubl conjugation</keyword>
<keyword id="KW-0833">Ubl conjugation pathway</keyword>
<keyword id="KW-0862">Zinc</keyword>
<keyword id="KW-0863">Zinc-finger</keyword>
<gene>
    <name type="primary">Fbxo43</name>
    <name type="synonym">Emi2</name>
</gene>
<sequence length="640" mass="71171">MDSSAVTVKGLSLIDFCSTSSFKYRGHHELSESCSLNKKEEEPMLTCEHPETPSLGSPNSAVSPSQIMKSVSLRKEKDKSPELCETPKLRRKKCTLRRRLDFSFPLLKGDSDSQSRSLESNISQGVSLEKHLPGSTSGFPKEDNFSPLVTSTIKTEDVVSNSQNSRLHFSQHKTSTIEDSKDNCGLFEVECLSPIEGNDFKDSITHFSDSSLSVSDENTCPELLGSCGSQTTYGADVTTSVTPVSSLIAKIKFNGNQTLDSSGEVRDSLFTPEDSGFCSLSWDKSEDFLSDQEGSFQELLQKHRVTPKVGDQVKKPKHFGRLRRLSTLQEQGQSEDEMQTVHPNSDSGVLESLQGSEEKRGNLALSFKDLSNTPALQLVQELFMKSKRKRSQQEDDQEFFEDRDEGKIARLQRVLAGLIGKKMGIEQLDILTELQYRNLKHILAMVLESLTSESLYSAWNVSRNWREIVAQDKKANRRRKLYIIQLRASAQGAAVLRVQDAATRLCLLSRLALRSVQAQAQAPSGEQVPTLSPWGDVLTPVASSSLTHLRSKQEQYVKVARTLFTDEALKPCPRCQSPAKYQPHKKRGLCSRLACGFDFCVLCLCAYHGSEDCRRGSAKARGSKDVLPGSAQSKRNLKRL</sequence>
<organism>
    <name type="scientific">Mus musculus</name>
    <name type="common">Mouse</name>
    <dbReference type="NCBI Taxonomy" id="10090"/>
    <lineage>
        <taxon>Eukaryota</taxon>
        <taxon>Metazoa</taxon>
        <taxon>Chordata</taxon>
        <taxon>Craniata</taxon>
        <taxon>Vertebrata</taxon>
        <taxon>Euteleostomi</taxon>
        <taxon>Mammalia</taxon>
        <taxon>Eutheria</taxon>
        <taxon>Euarchontoglires</taxon>
        <taxon>Glires</taxon>
        <taxon>Rodentia</taxon>
        <taxon>Myomorpha</taxon>
        <taxon>Muroidea</taxon>
        <taxon>Muridae</taxon>
        <taxon>Murinae</taxon>
        <taxon>Mus</taxon>
        <taxon>Mus</taxon>
    </lineage>
</organism>
<reference key="1">
    <citation type="journal article" date="2005" name="Science">
        <title>The transcriptional landscape of the mammalian genome.</title>
        <authorList>
            <person name="Carninci P."/>
            <person name="Kasukawa T."/>
            <person name="Katayama S."/>
            <person name="Gough J."/>
            <person name="Frith M.C."/>
            <person name="Maeda N."/>
            <person name="Oyama R."/>
            <person name="Ravasi T."/>
            <person name="Lenhard B."/>
            <person name="Wells C."/>
            <person name="Kodzius R."/>
            <person name="Shimokawa K."/>
            <person name="Bajic V.B."/>
            <person name="Brenner S.E."/>
            <person name="Batalov S."/>
            <person name="Forrest A.R."/>
            <person name="Zavolan M."/>
            <person name="Davis M.J."/>
            <person name="Wilming L.G."/>
            <person name="Aidinis V."/>
            <person name="Allen J.E."/>
            <person name="Ambesi-Impiombato A."/>
            <person name="Apweiler R."/>
            <person name="Aturaliya R.N."/>
            <person name="Bailey T.L."/>
            <person name="Bansal M."/>
            <person name="Baxter L."/>
            <person name="Beisel K.W."/>
            <person name="Bersano T."/>
            <person name="Bono H."/>
            <person name="Chalk A.M."/>
            <person name="Chiu K.P."/>
            <person name="Choudhary V."/>
            <person name="Christoffels A."/>
            <person name="Clutterbuck D.R."/>
            <person name="Crowe M.L."/>
            <person name="Dalla E."/>
            <person name="Dalrymple B.P."/>
            <person name="de Bono B."/>
            <person name="Della Gatta G."/>
            <person name="di Bernardo D."/>
            <person name="Down T."/>
            <person name="Engstrom P."/>
            <person name="Fagiolini M."/>
            <person name="Faulkner G."/>
            <person name="Fletcher C.F."/>
            <person name="Fukushima T."/>
            <person name="Furuno M."/>
            <person name="Futaki S."/>
            <person name="Gariboldi M."/>
            <person name="Georgii-Hemming P."/>
            <person name="Gingeras T.R."/>
            <person name="Gojobori T."/>
            <person name="Green R.E."/>
            <person name="Gustincich S."/>
            <person name="Harbers M."/>
            <person name="Hayashi Y."/>
            <person name="Hensch T.K."/>
            <person name="Hirokawa N."/>
            <person name="Hill D."/>
            <person name="Huminiecki L."/>
            <person name="Iacono M."/>
            <person name="Ikeo K."/>
            <person name="Iwama A."/>
            <person name="Ishikawa T."/>
            <person name="Jakt M."/>
            <person name="Kanapin A."/>
            <person name="Katoh M."/>
            <person name="Kawasawa Y."/>
            <person name="Kelso J."/>
            <person name="Kitamura H."/>
            <person name="Kitano H."/>
            <person name="Kollias G."/>
            <person name="Krishnan S.P."/>
            <person name="Kruger A."/>
            <person name="Kummerfeld S.K."/>
            <person name="Kurochkin I.V."/>
            <person name="Lareau L.F."/>
            <person name="Lazarevic D."/>
            <person name="Lipovich L."/>
            <person name="Liu J."/>
            <person name="Liuni S."/>
            <person name="McWilliam S."/>
            <person name="Madan Babu M."/>
            <person name="Madera M."/>
            <person name="Marchionni L."/>
            <person name="Matsuda H."/>
            <person name="Matsuzawa S."/>
            <person name="Miki H."/>
            <person name="Mignone F."/>
            <person name="Miyake S."/>
            <person name="Morris K."/>
            <person name="Mottagui-Tabar S."/>
            <person name="Mulder N."/>
            <person name="Nakano N."/>
            <person name="Nakauchi H."/>
            <person name="Ng P."/>
            <person name="Nilsson R."/>
            <person name="Nishiguchi S."/>
            <person name="Nishikawa S."/>
            <person name="Nori F."/>
            <person name="Ohara O."/>
            <person name="Okazaki Y."/>
            <person name="Orlando V."/>
            <person name="Pang K.C."/>
            <person name="Pavan W.J."/>
            <person name="Pavesi G."/>
            <person name="Pesole G."/>
            <person name="Petrovsky N."/>
            <person name="Piazza S."/>
            <person name="Reed J."/>
            <person name="Reid J.F."/>
            <person name="Ring B.Z."/>
            <person name="Ringwald M."/>
            <person name="Rost B."/>
            <person name="Ruan Y."/>
            <person name="Salzberg S.L."/>
            <person name="Sandelin A."/>
            <person name="Schneider C."/>
            <person name="Schoenbach C."/>
            <person name="Sekiguchi K."/>
            <person name="Semple C.A."/>
            <person name="Seno S."/>
            <person name="Sessa L."/>
            <person name="Sheng Y."/>
            <person name="Shibata Y."/>
            <person name="Shimada H."/>
            <person name="Shimada K."/>
            <person name="Silva D."/>
            <person name="Sinclair B."/>
            <person name="Sperling S."/>
            <person name="Stupka E."/>
            <person name="Sugiura K."/>
            <person name="Sultana R."/>
            <person name="Takenaka Y."/>
            <person name="Taki K."/>
            <person name="Tammoja K."/>
            <person name="Tan S.L."/>
            <person name="Tang S."/>
            <person name="Taylor M.S."/>
            <person name="Tegner J."/>
            <person name="Teichmann S.A."/>
            <person name="Ueda H.R."/>
            <person name="van Nimwegen E."/>
            <person name="Verardo R."/>
            <person name="Wei C.L."/>
            <person name="Yagi K."/>
            <person name="Yamanishi H."/>
            <person name="Zabarovsky E."/>
            <person name="Zhu S."/>
            <person name="Zimmer A."/>
            <person name="Hide W."/>
            <person name="Bult C."/>
            <person name="Grimmond S.M."/>
            <person name="Teasdale R.D."/>
            <person name="Liu E.T."/>
            <person name="Brusic V."/>
            <person name="Quackenbush J."/>
            <person name="Wahlestedt C."/>
            <person name="Mattick J.S."/>
            <person name="Hume D.A."/>
            <person name="Kai C."/>
            <person name="Sasaki D."/>
            <person name="Tomaru Y."/>
            <person name="Fukuda S."/>
            <person name="Kanamori-Katayama M."/>
            <person name="Suzuki M."/>
            <person name="Aoki J."/>
            <person name="Arakawa T."/>
            <person name="Iida J."/>
            <person name="Imamura K."/>
            <person name="Itoh M."/>
            <person name="Kato T."/>
            <person name="Kawaji H."/>
            <person name="Kawagashira N."/>
            <person name="Kawashima T."/>
            <person name="Kojima M."/>
            <person name="Kondo S."/>
            <person name="Konno H."/>
            <person name="Nakano K."/>
            <person name="Ninomiya N."/>
            <person name="Nishio T."/>
            <person name="Okada M."/>
            <person name="Plessy C."/>
            <person name="Shibata K."/>
            <person name="Shiraki T."/>
            <person name="Suzuki S."/>
            <person name="Tagami M."/>
            <person name="Waki K."/>
            <person name="Watahiki A."/>
            <person name="Okamura-Oho Y."/>
            <person name="Suzuki H."/>
            <person name="Kawai J."/>
            <person name="Hayashizaki Y."/>
        </authorList>
    </citation>
    <scope>NUCLEOTIDE SEQUENCE [LARGE SCALE MRNA]</scope>
    <source>
        <strain>C57BL/6J</strain>
        <tissue>Testis</tissue>
    </source>
</reference>
<reference key="2">
    <citation type="journal article" date="2004" name="Genome Res.">
        <title>The status, quality, and expansion of the NIH full-length cDNA project: the Mammalian Gene Collection (MGC).</title>
        <authorList>
            <consortium name="The MGC Project Team"/>
        </authorList>
    </citation>
    <scope>NUCLEOTIDE SEQUENCE [LARGE SCALE MRNA]</scope>
    <source>
        <strain>C57BL/6J</strain>
        <tissue>Egg</tissue>
        <tissue>Eye</tissue>
    </source>
</reference>
<reference key="3">
    <citation type="journal article" date="2006" name="EMBO J.">
        <title>Mammalian Emi2 mediates cytostatic arrest and transduces the signal for meiotic exit via Cdc20.</title>
        <authorList>
            <person name="Shoji S."/>
            <person name="Yoshida N."/>
            <person name="Amanai M."/>
            <person name="Ohgishi M."/>
            <person name="Fukui T."/>
            <person name="Fujimoto S."/>
            <person name="Nakano Y."/>
            <person name="Kajikawa E."/>
            <person name="Perry A.C.F."/>
        </authorList>
    </citation>
    <scope>TISSUE SPECIFICITY</scope>
    <scope>INTERACTION WITH CDC20</scope>
    <scope>FUNCTION</scope>
</reference>
<reference key="4">
    <citation type="journal article" date="2017" name="Cell Rep.">
        <title>Emi2 Is Essential for Mouse Spermatogenesis.</title>
        <authorList>
            <person name="Gopinathan L."/>
            <person name="Szmyd R."/>
            <person name="Low D."/>
            <person name="Diril M.K."/>
            <person name="Chang H.Y."/>
            <person name="Coppola V."/>
            <person name="Liu K."/>
            <person name="Tessarollo L."/>
            <person name="Guccione E."/>
            <person name="van Pelt A.M.M."/>
            <person name="Kaldis P."/>
        </authorList>
    </citation>
    <scope>DISRUPTION PHENOTYPE</scope>
    <scope>FUNCTION</scope>
    <scope>TISSUE SPECIFICITY</scope>
</reference>
<comment type="function">
    <text evidence="5 6">Required to establish and maintain the arrest of oocytes at the second meiotic metaphase until fertilization. Acts by inhibiting the anaphase-promoting complex/cyclosome (APC/C) ubiquitin ligase. Probably recognizes and binds to some phosphorylated proteins and promotes their ubiquitination and degradation (PubMed:16456547). Plays a vital role in modulating the ubiquitilation of CCNB1 and CDK1 during gametogenesis (PubMed:28723571).</text>
</comment>
<comment type="pathway">
    <text>Protein modification; protein ubiquitination.</text>
</comment>
<comment type="subunit">
    <text evidence="2 7">Part of a SCF (SKP1-cullin-F-box) protein ligase complex (By similarity). Interaction with SKP1 does not occur. Interacts with ANAPC2; the interaction is direct, ANAPC4, CDC16, CDC23; the interaction is direct, ANAPC10; the interaction is direct and CDC26, during spermatogenesis (By similarity). Interacts with CDC20 (Probable).</text>
</comment>
<comment type="interaction">
    <interactant intactId="EBI-8060482">
        <id>Q8CDI2</id>
    </interactant>
    <interactant intactId="EBI-2551389">
        <id>Q9JJ66</id>
        <label>Cdc20</label>
    </interactant>
    <organismsDiffer>false</organismsDiffer>
    <experiments>2</experiments>
</comment>
<comment type="tissue specificity">
    <text evidence="5 6">Present in testis and ovary (at protein level). Expression is high in immature oocytes, and diminishes after oocyte activation. Expressed post-meiotically in spermatids and sperm.</text>
</comment>
<comment type="PTM">
    <text evidence="1">Phosphorylated on Thr-176 and Ser-275 in response to calcium, which is a prerequisite for ubiquitination and proteasomal degradation.</text>
</comment>
<comment type="PTM">
    <text evidence="1">Ubiquitinated in response to calcium, which promotes proteasomal degradation.</text>
</comment>
<comment type="disruption phenotype">
    <text evidence="6">Both male and female with knockout of the gene are viable but sterile, consistent with the fact that the gene mediates metaphase II arrest but does not interfere with mitosis. The absence of the gene results in the arrest of meiosis I progression in spermatocytes at early diplotene of prophase I and is associated with a decrease of CDK1 activity.</text>
</comment>
<proteinExistence type="evidence at protein level"/>